<organism>
    <name type="scientific">Candida tropicalis (strain ATCC MYA-3404 / T1)</name>
    <name type="common">Yeast</name>
    <dbReference type="NCBI Taxonomy" id="294747"/>
    <lineage>
        <taxon>Eukaryota</taxon>
        <taxon>Fungi</taxon>
        <taxon>Dikarya</taxon>
        <taxon>Ascomycota</taxon>
        <taxon>Saccharomycotina</taxon>
        <taxon>Pichiomycetes</taxon>
        <taxon>Debaryomycetaceae</taxon>
        <taxon>Candida/Lodderomyces clade</taxon>
        <taxon>Candida</taxon>
    </lineage>
</organism>
<keyword id="KW-0963">Cytoplasm</keyword>
<keyword id="KW-0206">Cytoskeleton</keyword>
<keyword id="KW-1185">Reference proteome</keyword>
<comment type="function">
    <text evidence="1">Involved in mitochondrial migration along actin filaments.</text>
</comment>
<comment type="subcellular location">
    <subcellularLocation>
        <location evidence="1">Cytoplasm</location>
        <location evidence="1">Cytoskeleton</location>
        <location evidence="1">Actin patch</location>
    </subcellularLocation>
    <text evidence="1">Cortical actin patches.</text>
</comment>
<comment type="similarity">
    <text evidence="3">Belongs to the AIM21 family.</text>
</comment>
<sequence length="824" mass="91126">MTELNEEATVNEIEQEVQEQQEQVSIPHIPPRPTRHSPPAIDPDQSTSTSNSTNHPVIPQRPTSRPTKSQESKIPQQETPQETQELSSSGKDESDSSAKQNFEIPVIPTRPSRQHSEEPIIPPRPQRTTSQEPVIPIRPESTKSHEDKEEKPISEPVIPSRPKSKSNKPVAPSRPESSKSVEPEVPARPTRDHLTEPEVPLRPVSSREEAKEGLDNLIDQLEKDLSETVEPSVHAPIEDEDESPIEPVPSASGLRLPSEVDQQQESEIQEETNAIAEGQLNSETINSSNTFGDGEVTPGNSTTKTSFKSDEDEDDEHANHLGTGGDSSSFDDDVETISQEQEDHLEEEQQQEQQQEQEQEQERAAPVVQSLGTAIEEDDQAGGDETDTERAEAPAEEPVKEEPVKEEPVKEEPVKEEPVKEGLIKQESKPVIPVIPSRPPKKASLSRSTTEEDSIGLDQSKPNINKPIIPKRPTTESLKSGDESTSSQTQQPSIPVRPTKSNSSTSSGSSETVTKSKPPPPKPKKLSSKIAAFQQQLFNPMKSGSSADEDENKGEGEQPKPRKAVDSSKFLSRFGGNAIPLPGMFNPGQIPMHARPSSTTKDDDNDDDKEEQGSSRSVENAPVRRTRGPRGKKLPKAVSEAKVESESKFCLESGELFGLVFTKKVEESVDGLNEEEVAHKSLEEEVTEVNVKPEVASKTVEKQEEEDDIIDEYEKDDDIVEKDEPKSENDVAKEEVIEAKIDESVTVPGEFKEDTKEEEEEKEEEPVHRIAVSTDSRESPIEEEEDDDIVIDKTGEEKLNSSNSSLVDVKQEMEDELSKNDEML</sequence>
<reference key="1">
    <citation type="journal article" date="2009" name="Nature">
        <title>Evolution of pathogenicity and sexual reproduction in eight Candida genomes.</title>
        <authorList>
            <person name="Butler G."/>
            <person name="Rasmussen M.D."/>
            <person name="Lin M.F."/>
            <person name="Santos M.A.S."/>
            <person name="Sakthikumar S."/>
            <person name="Munro C.A."/>
            <person name="Rheinbay E."/>
            <person name="Grabherr M."/>
            <person name="Forche A."/>
            <person name="Reedy J.L."/>
            <person name="Agrafioti I."/>
            <person name="Arnaud M.B."/>
            <person name="Bates S."/>
            <person name="Brown A.J.P."/>
            <person name="Brunke S."/>
            <person name="Costanzo M.C."/>
            <person name="Fitzpatrick D.A."/>
            <person name="de Groot P.W.J."/>
            <person name="Harris D."/>
            <person name="Hoyer L.L."/>
            <person name="Hube B."/>
            <person name="Klis F.M."/>
            <person name="Kodira C."/>
            <person name="Lennard N."/>
            <person name="Logue M.E."/>
            <person name="Martin R."/>
            <person name="Neiman A.M."/>
            <person name="Nikolaou E."/>
            <person name="Quail M.A."/>
            <person name="Quinn J."/>
            <person name="Santos M.C."/>
            <person name="Schmitzberger F.F."/>
            <person name="Sherlock G."/>
            <person name="Shah P."/>
            <person name="Silverstein K.A.T."/>
            <person name="Skrzypek M.S."/>
            <person name="Soll D."/>
            <person name="Staggs R."/>
            <person name="Stansfield I."/>
            <person name="Stumpf M.P.H."/>
            <person name="Sudbery P.E."/>
            <person name="Srikantha T."/>
            <person name="Zeng Q."/>
            <person name="Berman J."/>
            <person name="Berriman M."/>
            <person name="Heitman J."/>
            <person name="Gow N.A.R."/>
            <person name="Lorenz M.C."/>
            <person name="Birren B.W."/>
            <person name="Kellis M."/>
            <person name="Cuomo C.A."/>
        </authorList>
    </citation>
    <scope>NUCLEOTIDE SEQUENCE [LARGE SCALE GENOMIC DNA]</scope>
    <source>
        <strain>ATCC MYA-3404 / T1</strain>
    </source>
</reference>
<evidence type="ECO:0000250" key="1"/>
<evidence type="ECO:0000256" key="2">
    <source>
        <dbReference type="SAM" id="MobiDB-lite"/>
    </source>
</evidence>
<evidence type="ECO:0000305" key="3"/>
<proteinExistence type="inferred from homology"/>
<name>AIM21_CANTT</name>
<gene>
    <name type="primary">AIM21</name>
    <name type="ORF">CTRG_03349</name>
</gene>
<feature type="chain" id="PRO_0000399518" description="Altered inheritance of mitochondria protein 21">
    <location>
        <begin position="1"/>
        <end position="824"/>
    </location>
</feature>
<feature type="region of interest" description="Disordered" evidence="2">
    <location>
        <begin position="15"/>
        <end position="645"/>
    </location>
</feature>
<feature type="region of interest" description="Disordered" evidence="2">
    <location>
        <begin position="694"/>
        <end position="824"/>
    </location>
</feature>
<feature type="compositionally biased region" description="Polar residues" evidence="2">
    <location>
        <begin position="44"/>
        <end position="74"/>
    </location>
</feature>
<feature type="compositionally biased region" description="Low complexity" evidence="2">
    <location>
        <begin position="75"/>
        <end position="89"/>
    </location>
</feature>
<feature type="compositionally biased region" description="Basic and acidic residues" evidence="2">
    <location>
        <begin position="140"/>
        <end position="153"/>
    </location>
</feature>
<feature type="compositionally biased region" description="Basic and acidic residues" evidence="2">
    <location>
        <begin position="205"/>
        <end position="226"/>
    </location>
</feature>
<feature type="compositionally biased region" description="Polar residues" evidence="2">
    <location>
        <begin position="279"/>
        <end position="291"/>
    </location>
</feature>
<feature type="compositionally biased region" description="Acidic residues" evidence="2">
    <location>
        <begin position="343"/>
        <end position="359"/>
    </location>
</feature>
<feature type="compositionally biased region" description="Acidic residues" evidence="2">
    <location>
        <begin position="375"/>
        <end position="387"/>
    </location>
</feature>
<feature type="compositionally biased region" description="Basic and acidic residues" evidence="2">
    <location>
        <begin position="388"/>
        <end position="428"/>
    </location>
</feature>
<feature type="compositionally biased region" description="Low complexity" evidence="2">
    <location>
        <begin position="499"/>
        <end position="516"/>
    </location>
</feature>
<feature type="compositionally biased region" description="Polar residues" evidence="2">
    <location>
        <begin position="533"/>
        <end position="546"/>
    </location>
</feature>
<feature type="compositionally biased region" description="Basic and acidic residues" evidence="2">
    <location>
        <begin position="553"/>
        <end position="566"/>
    </location>
</feature>
<feature type="compositionally biased region" description="Basic residues" evidence="2">
    <location>
        <begin position="624"/>
        <end position="635"/>
    </location>
</feature>
<feature type="compositionally biased region" description="Acidic residues" evidence="2">
    <location>
        <begin position="703"/>
        <end position="721"/>
    </location>
</feature>
<feature type="compositionally biased region" description="Basic and acidic residues" evidence="2">
    <location>
        <begin position="722"/>
        <end position="743"/>
    </location>
</feature>
<feature type="compositionally biased region" description="Basic and acidic residues" evidence="2">
    <location>
        <begin position="790"/>
        <end position="799"/>
    </location>
</feature>
<feature type="compositionally biased region" description="Basic and acidic residues" evidence="2">
    <location>
        <begin position="809"/>
        <end position="824"/>
    </location>
</feature>
<protein>
    <recommendedName>
        <fullName>Altered inheritance of mitochondria protein 21</fullName>
    </recommendedName>
</protein>
<accession>C5MBA7</accession>
<dbReference type="EMBL" id="GG692398">
    <property type="protein sequence ID" value="EER32924.1"/>
    <property type="molecule type" value="Genomic_DNA"/>
</dbReference>
<dbReference type="RefSeq" id="XP_002549052.1">
    <property type="nucleotide sequence ID" value="XM_002549006.1"/>
</dbReference>
<dbReference type="STRING" id="294747.C5MBA7"/>
<dbReference type="EnsemblFungi" id="CTRG_03349-t43_1">
    <property type="protein sequence ID" value="CTRG_03349-t43_1-p1"/>
    <property type="gene ID" value="CTRG_03349"/>
</dbReference>
<dbReference type="GeneID" id="8300305"/>
<dbReference type="KEGG" id="ctp:CTRG_03349"/>
<dbReference type="VEuPathDB" id="FungiDB:CTRG_03349"/>
<dbReference type="eggNOG" id="ENOG502S25J">
    <property type="taxonomic scope" value="Eukaryota"/>
</dbReference>
<dbReference type="HOGENOM" id="CLU_336152_0_0_1"/>
<dbReference type="OrthoDB" id="4096963at2759"/>
<dbReference type="Proteomes" id="UP000002037">
    <property type="component" value="Unassembled WGS sequence"/>
</dbReference>
<dbReference type="GO" id="GO:0030479">
    <property type="term" value="C:actin cortical patch"/>
    <property type="evidence" value="ECO:0007669"/>
    <property type="project" value="UniProtKB-SubCell"/>
</dbReference>